<accession>P26732</accession>
<accession>P07230</accession>
<evidence type="ECO:0000250" key="1"/>
<evidence type="ECO:0000269" key="2">
    <source>
    </source>
</evidence>
<evidence type="ECO:0000305" key="3"/>
<reference key="1">
    <citation type="journal article" date="1996" name="J. Mol. Biol.">
        <title>Multiple gene copies for bombyxin, an insulin-related peptide of the silkmoth Bombyx mori: structural signs for gene rearrangement and duplication responsible for generation of multiple molecular forms of bombyxin.</title>
        <authorList>
            <person name="Kondo H."/>
            <person name="Ino M."/>
            <person name="Suzuki A."/>
            <person name="Ishizaki H."/>
            <person name="Iwami M."/>
        </authorList>
    </citation>
    <scope>NUCLEOTIDE SEQUENCE [GENOMIC DNA]</scope>
</reference>
<reference key="2">
    <citation type="journal article" date="1986" name="Proc. Natl. Acad. Sci. U.S.A.">
        <title>Amino acid sequence of a prothoracicotropic hormone of the silkworm Bombyx mori.</title>
        <authorList>
            <person name="Nagasawa H."/>
            <person name="Kataoka H."/>
            <person name="Isogai A."/>
            <person name="Tamura S."/>
            <person name="Suzuki A."/>
            <person name="Mizoguchi A."/>
            <person name="Fujiwara Y."/>
            <person name="Suzuki A."/>
            <person name="Takahashi S.Y."/>
            <person name="Ishizaki H."/>
        </authorList>
    </citation>
    <scope>PROTEIN SEQUENCE OF 20-47 AND 73-92</scope>
    <scope>PYROGLUTAMATE FORMATION AT GLN-20</scope>
</reference>
<protein>
    <recommendedName>
        <fullName>Bombyxin A-9</fullName>
        <shortName>BBX-A9</shortName>
    </recommendedName>
    <alternativeName>
        <fullName>4K-prothoracicotropic hormone</fullName>
        <shortName>4K-PTTH</shortName>
    </alternativeName>
    <component>
        <recommendedName>
            <fullName>Bombyxin A-9 B chain</fullName>
        </recommendedName>
    </component>
    <component>
        <recommendedName>
            <fullName>Bombyxin A-9 A chain</fullName>
        </recommendedName>
    </component>
</protein>
<comment type="function">
    <text>Brain peptide responsible for activation of prothoracic glands to produce ecdysone in insects.</text>
</comment>
<comment type="subunit">
    <text>Heterodimer of a B chain and an A chain linked by two disulfide bonds.</text>
</comment>
<comment type="subcellular location">
    <subcellularLocation>
        <location>Secreted</location>
    </subcellularLocation>
</comment>
<comment type="miscellaneous">
    <text>Silk worm has two kinds of PTTH: 4K-PTTH and 22K-PTTH; there are many forms of 4K-PTTH.</text>
</comment>
<comment type="similarity">
    <text evidence="3">Belongs to the insulin family.</text>
</comment>
<dbReference type="EMBL" id="D00776">
    <property type="protein sequence ID" value="BAA00672.1"/>
    <property type="molecule type" value="Genomic_DNA"/>
</dbReference>
<dbReference type="PIR" id="JQ0825">
    <property type="entry name" value="JQ0825"/>
</dbReference>
<dbReference type="RefSeq" id="NP_001121608.1">
    <property type="nucleotide sequence ID" value="NM_001128136.1"/>
</dbReference>
<dbReference type="SMR" id="P26732"/>
<dbReference type="FunCoup" id="P26732">
    <property type="interactions" value="162"/>
</dbReference>
<dbReference type="STRING" id="7091.P26732"/>
<dbReference type="PaxDb" id="7091-BGIBMGA014205-TA"/>
<dbReference type="EnsemblMetazoa" id="NM_001128136.2">
    <property type="protein sequence ID" value="NP_001121608.2"/>
    <property type="gene ID" value="GeneID_100169658"/>
</dbReference>
<dbReference type="KEGG" id="bmor:100169658"/>
<dbReference type="CTD" id="100169658"/>
<dbReference type="eggNOG" id="ENOG502SESX">
    <property type="taxonomic scope" value="Eukaryota"/>
</dbReference>
<dbReference type="HOGENOM" id="CLU_125164_2_0_1"/>
<dbReference type="InParanoid" id="P26732"/>
<dbReference type="OMA" id="MWASTQQ"/>
<dbReference type="Proteomes" id="UP000005204">
    <property type="component" value="Unassembled WGS sequence"/>
</dbReference>
<dbReference type="GO" id="GO:0005615">
    <property type="term" value="C:extracellular space"/>
    <property type="evidence" value="ECO:0007669"/>
    <property type="project" value="InterPro"/>
</dbReference>
<dbReference type="GO" id="GO:0008083">
    <property type="term" value="F:growth factor activity"/>
    <property type="evidence" value="ECO:0007669"/>
    <property type="project" value="InterPro"/>
</dbReference>
<dbReference type="GO" id="GO:0005179">
    <property type="term" value="F:hormone activity"/>
    <property type="evidence" value="ECO:0007669"/>
    <property type="project" value="UniProtKB-KW"/>
</dbReference>
<dbReference type="CDD" id="cd04366">
    <property type="entry name" value="IlGF_insulin_bombyxin_like"/>
    <property type="match status" value="1"/>
</dbReference>
<dbReference type="Gene3D" id="1.10.100.10">
    <property type="entry name" value="Insulin-like"/>
    <property type="match status" value="1"/>
</dbReference>
<dbReference type="InterPro" id="IPR017097">
    <property type="entry name" value="Bombyxin"/>
</dbReference>
<dbReference type="InterPro" id="IPR030680">
    <property type="entry name" value="Bombyxin_A"/>
</dbReference>
<dbReference type="InterPro" id="IPR016179">
    <property type="entry name" value="Insulin-like"/>
</dbReference>
<dbReference type="InterPro" id="IPR036438">
    <property type="entry name" value="Insulin-like_sf"/>
</dbReference>
<dbReference type="InterPro" id="IPR022353">
    <property type="entry name" value="Insulin_CS"/>
</dbReference>
<dbReference type="InterPro" id="IPR022352">
    <property type="entry name" value="Insulin_family"/>
</dbReference>
<dbReference type="PANTHER" id="PTHR13647:SF4">
    <property type="entry name" value="INSULIN-LIKE PEPTIDE 1-RELATED"/>
    <property type="match status" value="1"/>
</dbReference>
<dbReference type="PANTHER" id="PTHR13647">
    <property type="entry name" value="INSULIN-LIKE PEPTIDE 2-RELATED"/>
    <property type="match status" value="1"/>
</dbReference>
<dbReference type="Pfam" id="PF00049">
    <property type="entry name" value="Insulin"/>
    <property type="match status" value="1"/>
</dbReference>
<dbReference type="PIRSF" id="PIRSF037038">
    <property type="entry name" value="Bombyxin"/>
    <property type="match status" value="1"/>
</dbReference>
<dbReference type="PIRSF" id="PIRSF500312">
    <property type="entry name" value="Bombyxin_A"/>
    <property type="match status" value="1"/>
</dbReference>
<dbReference type="PRINTS" id="PR02003">
    <property type="entry name" value="BOMBYXIN"/>
</dbReference>
<dbReference type="PRINTS" id="PR00276">
    <property type="entry name" value="INSULINFAMLY"/>
</dbReference>
<dbReference type="SMART" id="SM00078">
    <property type="entry name" value="IlGF"/>
    <property type="match status" value="1"/>
</dbReference>
<dbReference type="SUPFAM" id="SSF56994">
    <property type="entry name" value="Insulin-like"/>
    <property type="match status" value="1"/>
</dbReference>
<dbReference type="PROSITE" id="PS00262">
    <property type="entry name" value="INSULIN"/>
    <property type="match status" value="1"/>
</dbReference>
<gene>
    <name type="primary">BBXA9</name>
</gene>
<sequence>MKLLLAIALMLTTVMWASTQQPQAVHTYCGRHLARTLADLCWEAGVDKRSDAQFASYGSAWLMPYSEGRDQRGIVDECCLRPCSVDVLLSYC</sequence>
<proteinExistence type="evidence at protein level"/>
<organism>
    <name type="scientific">Bombyx mori</name>
    <name type="common">Silk moth</name>
    <dbReference type="NCBI Taxonomy" id="7091"/>
    <lineage>
        <taxon>Eukaryota</taxon>
        <taxon>Metazoa</taxon>
        <taxon>Ecdysozoa</taxon>
        <taxon>Arthropoda</taxon>
        <taxon>Hexapoda</taxon>
        <taxon>Insecta</taxon>
        <taxon>Pterygota</taxon>
        <taxon>Neoptera</taxon>
        <taxon>Endopterygota</taxon>
        <taxon>Lepidoptera</taxon>
        <taxon>Glossata</taxon>
        <taxon>Ditrysia</taxon>
        <taxon>Bombycoidea</taxon>
        <taxon>Bombycidae</taxon>
        <taxon>Bombycinae</taxon>
        <taxon>Bombyx</taxon>
    </lineage>
</organism>
<feature type="signal peptide" evidence="2">
    <location>
        <begin position="1"/>
        <end position="19"/>
    </location>
</feature>
<feature type="peptide" id="PRO_0000015986" description="Bombyxin A-9 B chain">
    <location>
        <begin position="20"/>
        <end position="47"/>
    </location>
</feature>
<feature type="propeptide" id="PRO_0000015987" description="C peptide like">
    <location>
        <begin position="50"/>
        <end position="71"/>
    </location>
</feature>
<feature type="peptide" id="PRO_0000015988" description="Bombyxin A-9 A chain">
    <location>
        <begin position="73"/>
        <end position="92"/>
    </location>
</feature>
<feature type="modified residue" description="Pyrrolidone carboxylic acid" evidence="2">
    <location>
        <position position="20"/>
    </location>
</feature>
<feature type="disulfide bond" description="Interchain (between B and A chains)" evidence="1">
    <location>
        <begin position="29"/>
        <end position="79"/>
    </location>
</feature>
<feature type="disulfide bond" description="Interchain (between B and A chains)" evidence="1">
    <location>
        <begin position="41"/>
        <end position="92"/>
    </location>
</feature>
<feature type="disulfide bond" evidence="1">
    <location>
        <begin position="78"/>
        <end position="83"/>
    </location>
</feature>
<name>BXA9_BOMMO</name>
<keyword id="KW-0165">Cleavage on pair of basic residues</keyword>
<keyword id="KW-0903">Direct protein sequencing</keyword>
<keyword id="KW-1015">Disulfide bond</keyword>
<keyword id="KW-0372">Hormone</keyword>
<keyword id="KW-0873">Pyrrolidone carboxylic acid</keyword>
<keyword id="KW-1185">Reference proteome</keyword>
<keyword id="KW-0964">Secreted</keyword>
<keyword id="KW-0732">Signal</keyword>